<comment type="function">
    <text evidence="1">Exhibits a very high intrinsic GTPase hydrolysis rate. Involved in the addition of a carboxymethylaminomethyl (cmnm) group at the wobble position (U34) of certain tRNAs, forming tRNA-cmnm(5)s(2)U34.</text>
</comment>
<comment type="cofactor">
    <cofactor evidence="1">
        <name>K(+)</name>
        <dbReference type="ChEBI" id="CHEBI:29103"/>
    </cofactor>
    <text evidence="1">Binds 1 potassium ion per subunit.</text>
</comment>
<comment type="subunit">
    <text evidence="1">Homodimer. Heterotetramer of two MnmE and two MnmG subunits.</text>
</comment>
<comment type="subcellular location">
    <subcellularLocation>
        <location evidence="1">Cytoplasm</location>
    </subcellularLocation>
</comment>
<comment type="similarity">
    <text evidence="1">Belongs to the TRAFAC class TrmE-Era-EngA-EngB-Septin-like GTPase superfamily. TrmE GTPase family.</text>
</comment>
<name>MNME_RUEST</name>
<feature type="chain" id="PRO_0000345906" description="tRNA modification GTPase MnmE">
    <location>
        <begin position="1"/>
        <end position="428"/>
    </location>
</feature>
<feature type="domain" description="TrmE-type G">
    <location>
        <begin position="213"/>
        <end position="351"/>
    </location>
</feature>
<feature type="binding site" evidence="1">
    <location>
        <position position="20"/>
    </location>
    <ligand>
        <name>(6S)-5-formyl-5,6,7,8-tetrahydrofolate</name>
        <dbReference type="ChEBI" id="CHEBI:57457"/>
    </ligand>
</feature>
<feature type="binding site" evidence="1">
    <location>
        <position position="77"/>
    </location>
    <ligand>
        <name>(6S)-5-formyl-5,6,7,8-tetrahydrofolate</name>
        <dbReference type="ChEBI" id="CHEBI:57457"/>
    </ligand>
</feature>
<feature type="binding site" evidence="1">
    <location>
        <position position="117"/>
    </location>
    <ligand>
        <name>(6S)-5-formyl-5,6,7,8-tetrahydrofolate</name>
        <dbReference type="ChEBI" id="CHEBI:57457"/>
    </ligand>
</feature>
<feature type="binding site" evidence="1">
    <location>
        <begin position="223"/>
        <end position="228"/>
    </location>
    <ligand>
        <name>GTP</name>
        <dbReference type="ChEBI" id="CHEBI:37565"/>
    </ligand>
</feature>
<feature type="binding site" evidence="1">
    <location>
        <position position="227"/>
    </location>
    <ligand>
        <name>Mg(2+)</name>
        <dbReference type="ChEBI" id="CHEBI:18420"/>
    </ligand>
</feature>
<feature type="binding site" evidence="1">
    <location>
        <begin position="242"/>
        <end position="248"/>
    </location>
    <ligand>
        <name>GTP</name>
        <dbReference type="ChEBI" id="CHEBI:37565"/>
    </ligand>
</feature>
<feature type="binding site" evidence="1">
    <location>
        <position position="248"/>
    </location>
    <ligand>
        <name>Mg(2+)</name>
        <dbReference type="ChEBI" id="CHEBI:18420"/>
    </ligand>
</feature>
<feature type="binding site" evidence="1">
    <location>
        <begin position="267"/>
        <end position="270"/>
    </location>
    <ligand>
        <name>GTP</name>
        <dbReference type="ChEBI" id="CHEBI:37565"/>
    </ligand>
</feature>
<feature type="binding site" evidence="1">
    <location>
        <position position="428"/>
    </location>
    <ligand>
        <name>(6S)-5-formyl-5,6,7,8-tetrahydrofolate</name>
        <dbReference type="ChEBI" id="CHEBI:57457"/>
    </ligand>
</feature>
<dbReference type="EC" id="3.6.-.-" evidence="1"/>
<dbReference type="EMBL" id="CP000377">
    <property type="protein sequence ID" value="ABF65596.1"/>
    <property type="molecule type" value="Genomic_DNA"/>
</dbReference>
<dbReference type="RefSeq" id="WP_011540177.1">
    <property type="nucleotide sequence ID" value="NC_008044.1"/>
</dbReference>
<dbReference type="SMR" id="Q1GCM0"/>
<dbReference type="STRING" id="292414.TM1040_2864"/>
<dbReference type="KEGG" id="sit:TM1040_2864"/>
<dbReference type="eggNOG" id="COG0486">
    <property type="taxonomic scope" value="Bacteria"/>
</dbReference>
<dbReference type="HOGENOM" id="CLU_019624_3_1_5"/>
<dbReference type="OrthoDB" id="9805918at2"/>
<dbReference type="Proteomes" id="UP000000636">
    <property type="component" value="Chromosome"/>
</dbReference>
<dbReference type="GO" id="GO:0005737">
    <property type="term" value="C:cytoplasm"/>
    <property type="evidence" value="ECO:0007669"/>
    <property type="project" value="UniProtKB-SubCell"/>
</dbReference>
<dbReference type="GO" id="GO:0005525">
    <property type="term" value="F:GTP binding"/>
    <property type="evidence" value="ECO:0007669"/>
    <property type="project" value="UniProtKB-UniRule"/>
</dbReference>
<dbReference type="GO" id="GO:0003924">
    <property type="term" value="F:GTPase activity"/>
    <property type="evidence" value="ECO:0007669"/>
    <property type="project" value="UniProtKB-UniRule"/>
</dbReference>
<dbReference type="GO" id="GO:0046872">
    <property type="term" value="F:metal ion binding"/>
    <property type="evidence" value="ECO:0007669"/>
    <property type="project" value="UniProtKB-KW"/>
</dbReference>
<dbReference type="GO" id="GO:0030488">
    <property type="term" value="P:tRNA methylation"/>
    <property type="evidence" value="ECO:0007669"/>
    <property type="project" value="TreeGrafter"/>
</dbReference>
<dbReference type="GO" id="GO:0002098">
    <property type="term" value="P:tRNA wobble uridine modification"/>
    <property type="evidence" value="ECO:0007669"/>
    <property type="project" value="TreeGrafter"/>
</dbReference>
<dbReference type="CDD" id="cd04164">
    <property type="entry name" value="trmE"/>
    <property type="match status" value="1"/>
</dbReference>
<dbReference type="CDD" id="cd14858">
    <property type="entry name" value="TrmE_N"/>
    <property type="match status" value="1"/>
</dbReference>
<dbReference type="FunFam" id="3.30.1360.120:FF:000007">
    <property type="entry name" value="tRNA modification GTPase GTPBP3, mitochondrial"/>
    <property type="match status" value="1"/>
</dbReference>
<dbReference type="Gene3D" id="3.40.50.300">
    <property type="entry name" value="P-loop containing nucleotide triphosphate hydrolases"/>
    <property type="match status" value="1"/>
</dbReference>
<dbReference type="Gene3D" id="3.30.1360.120">
    <property type="entry name" value="Probable tRNA modification gtpase trme, domain 1"/>
    <property type="match status" value="1"/>
</dbReference>
<dbReference type="Gene3D" id="1.20.120.430">
    <property type="entry name" value="tRNA modification GTPase MnmE domain 2"/>
    <property type="match status" value="1"/>
</dbReference>
<dbReference type="HAMAP" id="MF_00379">
    <property type="entry name" value="GTPase_MnmE"/>
    <property type="match status" value="1"/>
</dbReference>
<dbReference type="InterPro" id="IPR031168">
    <property type="entry name" value="G_TrmE"/>
</dbReference>
<dbReference type="InterPro" id="IPR006073">
    <property type="entry name" value="GTP-bd"/>
</dbReference>
<dbReference type="InterPro" id="IPR018948">
    <property type="entry name" value="GTP-bd_TrmE_N"/>
</dbReference>
<dbReference type="InterPro" id="IPR004520">
    <property type="entry name" value="GTPase_MnmE"/>
</dbReference>
<dbReference type="InterPro" id="IPR027368">
    <property type="entry name" value="MnmE_dom2"/>
</dbReference>
<dbReference type="InterPro" id="IPR025867">
    <property type="entry name" value="MnmE_helical"/>
</dbReference>
<dbReference type="InterPro" id="IPR027417">
    <property type="entry name" value="P-loop_NTPase"/>
</dbReference>
<dbReference type="InterPro" id="IPR005225">
    <property type="entry name" value="Small_GTP-bd"/>
</dbReference>
<dbReference type="InterPro" id="IPR027266">
    <property type="entry name" value="TrmE/GcvT_dom1"/>
</dbReference>
<dbReference type="NCBIfam" id="NF003661">
    <property type="entry name" value="PRK05291.1-3"/>
    <property type="match status" value="1"/>
</dbReference>
<dbReference type="NCBIfam" id="TIGR00231">
    <property type="entry name" value="small_GTP"/>
    <property type="match status" value="1"/>
</dbReference>
<dbReference type="PANTHER" id="PTHR42714">
    <property type="entry name" value="TRNA MODIFICATION GTPASE GTPBP3"/>
    <property type="match status" value="1"/>
</dbReference>
<dbReference type="PANTHER" id="PTHR42714:SF2">
    <property type="entry name" value="TRNA MODIFICATION GTPASE GTPBP3, MITOCHONDRIAL"/>
    <property type="match status" value="1"/>
</dbReference>
<dbReference type="Pfam" id="PF01926">
    <property type="entry name" value="MMR_HSR1"/>
    <property type="match status" value="1"/>
</dbReference>
<dbReference type="Pfam" id="PF12631">
    <property type="entry name" value="MnmE_helical"/>
    <property type="match status" value="1"/>
</dbReference>
<dbReference type="Pfam" id="PF10396">
    <property type="entry name" value="TrmE_N"/>
    <property type="match status" value="1"/>
</dbReference>
<dbReference type="PRINTS" id="PR00326">
    <property type="entry name" value="GTP1OBG"/>
</dbReference>
<dbReference type="SUPFAM" id="SSF103025">
    <property type="entry name" value="Folate-binding domain"/>
    <property type="match status" value="1"/>
</dbReference>
<dbReference type="SUPFAM" id="SSF52540">
    <property type="entry name" value="P-loop containing nucleoside triphosphate hydrolases"/>
    <property type="match status" value="1"/>
</dbReference>
<dbReference type="SUPFAM" id="SSF116878">
    <property type="entry name" value="TrmE connector domain"/>
    <property type="match status" value="1"/>
</dbReference>
<dbReference type="PROSITE" id="PS51709">
    <property type="entry name" value="G_TRME"/>
    <property type="match status" value="1"/>
</dbReference>
<reference key="1">
    <citation type="submission" date="2006-05" db="EMBL/GenBank/DDBJ databases">
        <title>Complete sequence of chromosome of Silicibacter sp. TM1040.</title>
        <authorList>
            <consortium name="US DOE Joint Genome Institute"/>
            <person name="Copeland A."/>
            <person name="Lucas S."/>
            <person name="Lapidus A."/>
            <person name="Barry K."/>
            <person name="Detter J.C."/>
            <person name="Glavina del Rio T."/>
            <person name="Hammon N."/>
            <person name="Israni S."/>
            <person name="Dalin E."/>
            <person name="Tice H."/>
            <person name="Pitluck S."/>
            <person name="Brettin T."/>
            <person name="Bruce D."/>
            <person name="Han C."/>
            <person name="Tapia R."/>
            <person name="Goodwin L."/>
            <person name="Thompson L.S."/>
            <person name="Gilna P."/>
            <person name="Schmutz J."/>
            <person name="Larimer F."/>
            <person name="Land M."/>
            <person name="Hauser L."/>
            <person name="Kyrpides N."/>
            <person name="Kim E."/>
            <person name="Belas R."/>
            <person name="Moran M.A."/>
            <person name="Buchan A."/>
            <person name="Gonzalez J.M."/>
            <person name="Schell M.A."/>
            <person name="Sun F."/>
            <person name="Richardson P."/>
        </authorList>
    </citation>
    <scope>NUCLEOTIDE SEQUENCE [LARGE SCALE GENOMIC DNA]</scope>
    <source>
        <strain>TM1040</strain>
    </source>
</reference>
<keyword id="KW-0963">Cytoplasm</keyword>
<keyword id="KW-0342">GTP-binding</keyword>
<keyword id="KW-0378">Hydrolase</keyword>
<keyword id="KW-0460">Magnesium</keyword>
<keyword id="KW-0479">Metal-binding</keyword>
<keyword id="KW-0547">Nucleotide-binding</keyword>
<keyword id="KW-0630">Potassium</keyword>
<keyword id="KW-1185">Reference proteome</keyword>
<keyword id="KW-0819">tRNA processing</keyword>
<evidence type="ECO:0000255" key="1">
    <source>
        <dbReference type="HAMAP-Rule" id="MF_00379"/>
    </source>
</evidence>
<gene>
    <name evidence="1" type="primary">mnmE</name>
    <name evidence="1" type="synonym">trmE</name>
    <name type="ordered locus">TM1040_2864</name>
</gene>
<proteinExistence type="inferred from homology"/>
<accession>Q1GCM0</accession>
<organism>
    <name type="scientific">Ruegeria sp. (strain TM1040)</name>
    <name type="common">Silicibacter sp.</name>
    <dbReference type="NCBI Taxonomy" id="292414"/>
    <lineage>
        <taxon>Bacteria</taxon>
        <taxon>Pseudomonadati</taxon>
        <taxon>Pseudomonadota</taxon>
        <taxon>Alphaproteobacteria</taxon>
        <taxon>Rhodobacterales</taxon>
        <taxon>Roseobacteraceae</taxon>
        <taxon>Ruegeria</taxon>
    </lineage>
</organism>
<protein>
    <recommendedName>
        <fullName evidence="1">tRNA modification GTPase MnmE</fullName>
        <ecNumber evidence="1">3.6.-.-</ecNumber>
    </recommendedName>
</protein>
<sequence>METIFALATAQGKAGVAVIRVSGPHAIEIGEKLTRRTLPARGMIFSKLKDSAGEILDEALVLSFTSPDSFTGENIVEFQLHGSIAVVSAVMSAIEETGVARLADPGEFTRRALDNGKLDLTQVEGLADLIDAETEAQRKQAQVILAGTLGDLADRWRTDLIRAASLIEVTIDFADEEVPVDVTPEVKQLLSGVLHDIEKEVDGVAIAERIREGFEVAIVGSPNVGKSTLLNALAGRTAAITSEYAGTTRDVIEVRMDLAGLPVTLLDTAGLRETDDHVEGIGIRLAQERAERADIRVFLAEEDESFSIQMREGDLRLLPKADERRSAKGAISGRTGQGVDDLVSRISDTLRNRTAHDGIATRARHRETMNRAVLSLRQAIEVVEQGPEFYDLAAEDMRSAIRALELLVGRINVENLLDEIFSSFCLGK</sequence>